<gene>
    <name evidence="1" type="primary">rpsB</name>
    <name type="ordered locus">EC55989_0163</name>
</gene>
<keyword id="KW-1185">Reference proteome</keyword>
<keyword id="KW-0687">Ribonucleoprotein</keyword>
<keyword id="KW-0689">Ribosomal protein</keyword>
<reference key="1">
    <citation type="journal article" date="2009" name="PLoS Genet.">
        <title>Organised genome dynamics in the Escherichia coli species results in highly diverse adaptive paths.</title>
        <authorList>
            <person name="Touchon M."/>
            <person name="Hoede C."/>
            <person name="Tenaillon O."/>
            <person name="Barbe V."/>
            <person name="Baeriswyl S."/>
            <person name="Bidet P."/>
            <person name="Bingen E."/>
            <person name="Bonacorsi S."/>
            <person name="Bouchier C."/>
            <person name="Bouvet O."/>
            <person name="Calteau A."/>
            <person name="Chiapello H."/>
            <person name="Clermont O."/>
            <person name="Cruveiller S."/>
            <person name="Danchin A."/>
            <person name="Diard M."/>
            <person name="Dossat C."/>
            <person name="Karoui M.E."/>
            <person name="Frapy E."/>
            <person name="Garry L."/>
            <person name="Ghigo J.M."/>
            <person name="Gilles A.M."/>
            <person name="Johnson J."/>
            <person name="Le Bouguenec C."/>
            <person name="Lescat M."/>
            <person name="Mangenot S."/>
            <person name="Martinez-Jehanne V."/>
            <person name="Matic I."/>
            <person name="Nassif X."/>
            <person name="Oztas S."/>
            <person name="Petit M.A."/>
            <person name="Pichon C."/>
            <person name="Rouy Z."/>
            <person name="Ruf C.S."/>
            <person name="Schneider D."/>
            <person name="Tourret J."/>
            <person name="Vacherie B."/>
            <person name="Vallenet D."/>
            <person name="Medigue C."/>
            <person name="Rocha E.P.C."/>
            <person name="Denamur E."/>
        </authorList>
    </citation>
    <scope>NUCLEOTIDE SEQUENCE [LARGE SCALE GENOMIC DNA]</scope>
    <source>
        <strain>55989 / EAEC</strain>
    </source>
</reference>
<dbReference type="EMBL" id="CU928145">
    <property type="protein sequence ID" value="CAU96049.1"/>
    <property type="molecule type" value="Genomic_DNA"/>
</dbReference>
<dbReference type="RefSeq" id="WP_000246884.1">
    <property type="nucleotide sequence ID" value="NC_011748.1"/>
</dbReference>
<dbReference type="SMR" id="B7LGN0"/>
<dbReference type="GeneID" id="93777256"/>
<dbReference type="KEGG" id="eck:EC55989_0163"/>
<dbReference type="HOGENOM" id="CLU_040318_1_2_6"/>
<dbReference type="Proteomes" id="UP000000746">
    <property type="component" value="Chromosome"/>
</dbReference>
<dbReference type="GO" id="GO:0022627">
    <property type="term" value="C:cytosolic small ribosomal subunit"/>
    <property type="evidence" value="ECO:0007669"/>
    <property type="project" value="TreeGrafter"/>
</dbReference>
<dbReference type="GO" id="GO:0003735">
    <property type="term" value="F:structural constituent of ribosome"/>
    <property type="evidence" value="ECO:0007669"/>
    <property type="project" value="InterPro"/>
</dbReference>
<dbReference type="GO" id="GO:0006412">
    <property type="term" value="P:translation"/>
    <property type="evidence" value="ECO:0007669"/>
    <property type="project" value="UniProtKB-UniRule"/>
</dbReference>
<dbReference type="CDD" id="cd01425">
    <property type="entry name" value="RPS2"/>
    <property type="match status" value="1"/>
</dbReference>
<dbReference type="FunFam" id="1.10.287.610:FF:000001">
    <property type="entry name" value="30S ribosomal protein S2"/>
    <property type="match status" value="1"/>
</dbReference>
<dbReference type="Gene3D" id="3.40.50.10490">
    <property type="entry name" value="Glucose-6-phosphate isomerase like protein, domain 1"/>
    <property type="match status" value="1"/>
</dbReference>
<dbReference type="Gene3D" id="1.10.287.610">
    <property type="entry name" value="Helix hairpin bin"/>
    <property type="match status" value="1"/>
</dbReference>
<dbReference type="HAMAP" id="MF_00291_B">
    <property type="entry name" value="Ribosomal_uS2_B"/>
    <property type="match status" value="1"/>
</dbReference>
<dbReference type="InterPro" id="IPR001865">
    <property type="entry name" value="Ribosomal_uS2"/>
</dbReference>
<dbReference type="InterPro" id="IPR005706">
    <property type="entry name" value="Ribosomal_uS2_bac/mit/plastid"/>
</dbReference>
<dbReference type="InterPro" id="IPR018130">
    <property type="entry name" value="Ribosomal_uS2_CS"/>
</dbReference>
<dbReference type="InterPro" id="IPR023591">
    <property type="entry name" value="Ribosomal_uS2_flav_dom_sf"/>
</dbReference>
<dbReference type="NCBIfam" id="TIGR01011">
    <property type="entry name" value="rpsB_bact"/>
    <property type="match status" value="1"/>
</dbReference>
<dbReference type="PANTHER" id="PTHR12534">
    <property type="entry name" value="30S RIBOSOMAL PROTEIN S2 PROKARYOTIC AND ORGANELLAR"/>
    <property type="match status" value="1"/>
</dbReference>
<dbReference type="PANTHER" id="PTHR12534:SF0">
    <property type="entry name" value="SMALL RIBOSOMAL SUBUNIT PROTEIN US2M"/>
    <property type="match status" value="1"/>
</dbReference>
<dbReference type="Pfam" id="PF00318">
    <property type="entry name" value="Ribosomal_S2"/>
    <property type="match status" value="1"/>
</dbReference>
<dbReference type="PRINTS" id="PR00395">
    <property type="entry name" value="RIBOSOMALS2"/>
</dbReference>
<dbReference type="SUPFAM" id="SSF52313">
    <property type="entry name" value="Ribosomal protein S2"/>
    <property type="match status" value="1"/>
</dbReference>
<dbReference type="PROSITE" id="PS00962">
    <property type="entry name" value="RIBOSOMAL_S2_1"/>
    <property type="match status" value="1"/>
</dbReference>
<dbReference type="PROSITE" id="PS00963">
    <property type="entry name" value="RIBOSOMAL_S2_2"/>
    <property type="match status" value="1"/>
</dbReference>
<sequence length="241" mass="26758">MATVSMRDMLKAGVHFGHQTRYWNPKMKPFIFGARNKVHIINLEKTVPMFNEALAELNKIASRKGKILFVGTKRAASEAVKDAALSCDQFFVNHRWLGGMLTNWKTVRQSIKRLKDLETQSQDGTFEKLTKKEALMRTRELEKLENSLGGIKDMGGLPDALFVIDADHEHIAIKEANNLGIPVFAIVDTNSDPDGVDFVIPGNDDAIRAVTLYLGAVAATVREGRSQDLASQAEESFVEAE</sequence>
<comment type="similarity">
    <text evidence="1">Belongs to the universal ribosomal protein uS2 family.</text>
</comment>
<evidence type="ECO:0000255" key="1">
    <source>
        <dbReference type="HAMAP-Rule" id="MF_00291"/>
    </source>
</evidence>
<evidence type="ECO:0000305" key="2"/>
<organism>
    <name type="scientific">Escherichia coli (strain 55989 / EAEC)</name>
    <dbReference type="NCBI Taxonomy" id="585055"/>
    <lineage>
        <taxon>Bacteria</taxon>
        <taxon>Pseudomonadati</taxon>
        <taxon>Pseudomonadota</taxon>
        <taxon>Gammaproteobacteria</taxon>
        <taxon>Enterobacterales</taxon>
        <taxon>Enterobacteriaceae</taxon>
        <taxon>Escherichia</taxon>
    </lineage>
</organism>
<proteinExistence type="inferred from homology"/>
<name>RS2_ECO55</name>
<feature type="chain" id="PRO_1000132645" description="Small ribosomal subunit protein uS2">
    <location>
        <begin position="1"/>
        <end position="241"/>
    </location>
</feature>
<protein>
    <recommendedName>
        <fullName evidence="1">Small ribosomal subunit protein uS2</fullName>
    </recommendedName>
    <alternativeName>
        <fullName evidence="2">30S ribosomal protein S2</fullName>
    </alternativeName>
</protein>
<accession>B7LGN0</accession>